<evidence type="ECO:0000250" key="1"/>
<evidence type="ECO:0000250" key="2">
    <source>
        <dbReference type="UniProtKB" id="P06239"/>
    </source>
</evidence>
<evidence type="ECO:0000255" key="3">
    <source>
        <dbReference type="PROSITE-ProRule" id="PRU00159"/>
    </source>
</evidence>
<evidence type="ECO:0000255" key="4">
    <source>
        <dbReference type="PROSITE-ProRule" id="PRU00191"/>
    </source>
</evidence>
<evidence type="ECO:0000255" key="5">
    <source>
        <dbReference type="PROSITE-ProRule" id="PRU00192"/>
    </source>
</evidence>
<evidence type="ECO:0000255" key="6">
    <source>
        <dbReference type="PROSITE-ProRule" id="PRU10028"/>
    </source>
</evidence>
<evidence type="ECO:0007744" key="7">
    <source>
    </source>
</evidence>
<sequence length="509" mass="57890">MGCVCSSNPEDDWMENIDVCENCHYPIVPLDSKSTLPIRTGSEVRDPLVTYEGSLPPASPLQDNLVIALHSYEPSHDGDLGFEKGEQLRILEQSGEWWKAQSLTTGQEGFIPFNFVAKANSLEPEPWFFKNLSRKDAERQLLAPGNTHGSFLIRESESTAGSFSLSVRDFDQNQGEVVKHYKIRNLDNGGFYISPRITFPGLHDLVRHYTNASDGLCTKLSRPCQTQKPQKPWWEDEWEVPRETLKLVERLGAGQFGEVWMGYYNGHTKVAVKSLKQGSMSPDAFLAEANLMKQLQHPRLVRLYAVVTQEPIYIITEYMENGSLVDFLKTPSGIKLNVNKLLDMAAQIAEGMAFIEEQNYIHRDLRAANILVSDTLSCKIADFGLARLIEDNEYTAREGAKFPIKWTAPEAINYGTFTIKSDVWSFGILLTEIVTHGRIPYPGMTNPEVIQNLEKGYRMVRPDNCPEELYHLMMLCWKERPEDRPTFDYLRSVLDDFFTATEGQYQPQP</sequence>
<dbReference type="EC" id="2.7.10.2"/>
<dbReference type="EMBL" id="CH473968">
    <property type="protein sequence ID" value="EDL80546.1"/>
    <property type="molecule type" value="Genomic_DNA"/>
</dbReference>
<dbReference type="EMBL" id="BC160881">
    <property type="protein sequence ID" value="AAI60881.1"/>
    <property type="molecule type" value="mRNA"/>
</dbReference>
<dbReference type="EMBL" id="Z15029">
    <property type="protein sequence ID" value="CAA78748.1"/>
    <property type="molecule type" value="Genomic_DNA"/>
</dbReference>
<dbReference type="PIR" id="I58370">
    <property type="entry name" value="S24780"/>
</dbReference>
<dbReference type="RefSeq" id="NP_001094179.1">
    <property type="nucleotide sequence ID" value="NM_001100709.2"/>
</dbReference>
<dbReference type="RefSeq" id="NP_001402799.1">
    <property type="nucleotide sequence ID" value="NM_001415870.1"/>
</dbReference>
<dbReference type="RefSeq" id="XP_006238995.1">
    <property type="nucleotide sequence ID" value="XM_006238933.3"/>
</dbReference>
<dbReference type="RefSeq" id="XP_008762362.1">
    <property type="nucleotide sequence ID" value="XM_008764140.2"/>
</dbReference>
<dbReference type="BMRB" id="Q01621"/>
<dbReference type="SMR" id="Q01621"/>
<dbReference type="FunCoup" id="Q01621">
    <property type="interactions" value="256"/>
</dbReference>
<dbReference type="IntAct" id="Q01621">
    <property type="interactions" value="3"/>
</dbReference>
<dbReference type="STRING" id="10116.ENSRNOP00000012936"/>
<dbReference type="iPTMnet" id="Q01621"/>
<dbReference type="PhosphoSitePlus" id="Q01621"/>
<dbReference type="PaxDb" id="10116-ENSRNOP00000012936"/>
<dbReference type="GeneID" id="313050"/>
<dbReference type="KEGG" id="rno:313050"/>
<dbReference type="AGR" id="RGD:2994"/>
<dbReference type="CTD" id="3932"/>
<dbReference type="RGD" id="2994">
    <property type="gene designation" value="Lck"/>
</dbReference>
<dbReference type="eggNOG" id="KOG0197">
    <property type="taxonomic scope" value="Eukaryota"/>
</dbReference>
<dbReference type="HOGENOM" id="CLU_000288_7_2_1"/>
<dbReference type="InParanoid" id="Q01621"/>
<dbReference type="PhylomeDB" id="Q01621"/>
<dbReference type="TreeFam" id="TF351634"/>
<dbReference type="Reactome" id="R-RNO-114604">
    <property type="pathway name" value="GPVI-mediated activation cascade"/>
</dbReference>
<dbReference type="Reactome" id="R-RNO-1257604">
    <property type="pathway name" value="PIP3 activates AKT signaling"/>
</dbReference>
<dbReference type="Reactome" id="R-RNO-1433557">
    <property type="pathway name" value="Signaling by SCF-KIT"/>
</dbReference>
<dbReference type="Reactome" id="R-RNO-1433559">
    <property type="pathway name" value="Regulation of KIT signaling"/>
</dbReference>
<dbReference type="Reactome" id="R-RNO-202424">
    <property type="pathway name" value="Downstream TCR signaling"/>
</dbReference>
<dbReference type="Reactome" id="R-RNO-202427">
    <property type="pathway name" value="Phosphorylation of CD3 and TCR zeta chains"/>
</dbReference>
<dbReference type="Reactome" id="R-RNO-202430">
    <property type="pathway name" value="Translocation of ZAP-70 to Immunological synapse"/>
</dbReference>
<dbReference type="Reactome" id="R-RNO-202433">
    <property type="pathway name" value="Generation of second messenger molecules"/>
</dbReference>
<dbReference type="Reactome" id="R-RNO-210990">
    <property type="pathway name" value="PECAM1 interactions"/>
</dbReference>
<dbReference type="Reactome" id="R-RNO-2424491">
    <property type="pathway name" value="DAP12 signaling"/>
</dbReference>
<dbReference type="Reactome" id="R-RNO-389356">
    <property type="pathway name" value="Co-stimulation by CD28"/>
</dbReference>
<dbReference type="Reactome" id="R-RNO-389357">
    <property type="pathway name" value="CD28 dependent PI3K/Akt signaling"/>
</dbReference>
<dbReference type="Reactome" id="R-RNO-389359">
    <property type="pathway name" value="CD28 dependent Vav1 pathway"/>
</dbReference>
<dbReference type="Reactome" id="R-RNO-389513">
    <property type="pathway name" value="Co-inhibition by CTLA4"/>
</dbReference>
<dbReference type="Reactome" id="R-RNO-389948">
    <property type="pathway name" value="Co-inhibition by PD-1"/>
</dbReference>
<dbReference type="Reactome" id="R-RNO-6811558">
    <property type="pathway name" value="PI5P, PP2A and IER3 Regulate PI3K/AKT Signaling"/>
</dbReference>
<dbReference type="Reactome" id="R-RNO-9013407">
    <property type="pathway name" value="RHOH GTPase cycle"/>
</dbReference>
<dbReference type="Reactome" id="R-RNO-9020558">
    <property type="pathway name" value="Interleukin-2 signaling"/>
</dbReference>
<dbReference type="PRO" id="PR:Q01621"/>
<dbReference type="Proteomes" id="UP000002494">
    <property type="component" value="Unplaced"/>
</dbReference>
<dbReference type="Proteomes" id="UP000234681">
    <property type="component" value="Chromosome 5"/>
</dbReference>
<dbReference type="GO" id="GO:0005911">
    <property type="term" value="C:cell-cell junction"/>
    <property type="evidence" value="ECO:0000266"/>
    <property type="project" value="RGD"/>
</dbReference>
<dbReference type="GO" id="GO:0005737">
    <property type="term" value="C:cytoplasm"/>
    <property type="evidence" value="ECO:0000266"/>
    <property type="project" value="RGD"/>
</dbReference>
<dbReference type="GO" id="GO:0005829">
    <property type="term" value="C:cytosol"/>
    <property type="evidence" value="ECO:0007669"/>
    <property type="project" value="UniProtKB-SubCell"/>
</dbReference>
<dbReference type="GO" id="GO:0030139">
    <property type="term" value="C:endocytic vesicle"/>
    <property type="evidence" value="ECO:0000314"/>
    <property type="project" value="RGD"/>
</dbReference>
<dbReference type="GO" id="GO:0098978">
    <property type="term" value="C:glutamatergic synapse"/>
    <property type="evidence" value="ECO:0000314"/>
    <property type="project" value="SynGO"/>
</dbReference>
<dbReference type="GO" id="GO:0001772">
    <property type="term" value="C:immunological synapse"/>
    <property type="evidence" value="ECO:0000266"/>
    <property type="project" value="RGD"/>
</dbReference>
<dbReference type="GO" id="GO:0045121">
    <property type="term" value="C:membrane raft"/>
    <property type="evidence" value="ECO:0000266"/>
    <property type="project" value="RGD"/>
</dbReference>
<dbReference type="GO" id="GO:0000242">
    <property type="term" value="C:pericentriolar material"/>
    <property type="evidence" value="ECO:0000266"/>
    <property type="project" value="RGD"/>
</dbReference>
<dbReference type="GO" id="GO:0005886">
    <property type="term" value="C:plasma membrane"/>
    <property type="evidence" value="ECO:0000266"/>
    <property type="project" value="RGD"/>
</dbReference>
<dbReference type="GO" id="GO:0099091">
    <property type="term" value="C:postsynaptic specialization, intracellular component"/>
    <property type="evidence" value="ECO:0000314"/>
    <property type="project" value="SynGO"/>
</dbReference>
<dbReference type="GO" id="GO:0003823">
    <property type="term" value="F:antigen binding"/>
    <property type="evidence" value="ECO:0000353"/>
    <property type="project" value="RGD"/>
</dbReference>
<dbReference type="GO" id="GO:0005524">
    <property type="term" value="F:ATP binding"/>
    <property type="evidence" value="ECO:0007669"/>
    <property type="project" value="UniProtKB-KW"/>
</dbReference>
<dbReference type="GO" id="GO:0051117">
    <property type="term" value="F:ATPase binding"/>
    <property type="evidence" value="ECO:0000266"/>
    <property type="project" value="RGD"/>
</dbReference>
<dbReference type="GO" id="GO:0042609">
    <property type="term" value="F:CD4 receptor binding"/>
    <property type="evidence" value="ECO:0000266"/>
    <property type="project" value="RGD"/>
</dbReference>
<dbReference type="GO" id="GO:0042610">
    <property type="term" value="F:CD8 receptor binding"/>
    <property type="evidence" value="ECO:0000266"/>
    <property type="project" value="RGD"/>
</dbReference>
<dbReference type="GO" id="GO:0042802">
    <property type="term" value="F:identical protein binding"/>
    <property type="evidence" value="ECO:0000266"/>
    <property type="project" value="RGD"/>
</dbReference>
<dbReference type="GO" id="GO:0004715">
    <property type="term" value="F:non-membrane spanning protein tyrosine kinase activity"/>
    <property type="evidence" value="ECO:0000266"/>
    <property type="project" value="RGD"/>
</dbReference>
<dbReference type="GO" id="GO:0043548">
    <property type="term" value="F:phosphatidylinositol 3-kinase binding"/>
    <property type="evidence" value="ECO:0000266"/>
    <property type="project" value="RGD"/>
</dbReference>
<dbReference type="GO" id="GO:0016004">
    <property type="term" value="F:phospholipase activator activity"/>
    <property type="evidence" value="ECO:0000266"/>
    <property type="project" value="RGD"/>
</dbReference>
<dbReference type="GO" id="GO:0043274">
    <property type="term" value="F:phospholipase binding"/>
    <property type="evidence" value="ECO:0000266"/>
    <property type="project" value="RGD"/>
</dbReference>
<dbReference type="GO" id="GO:0001784">
    <property type="term" value="F:phosphotyrosine residue binding"/>
    <property type="evidence" value="ECO:0000266"/>
    <property type="project" value="RGD"/>
</dbReference>
<dbReference type="GO" id="GO:1990405">
    <property type="term" value="F:protein antigen binding"/>
    <property type="evidence" value="ECO:0000266"/>
    <property type="project" value="RGD"/>
</dbReference>
<dbReference type="GO" id="GO:0019901">
    <property type="term" value="F:protein kinase binding"/>
    <property type="evidence" value="ECO:0000266"/>
    <property type="project" value="RGD"/>
</dbReference>
<dbReference type="GO" id="GO:0019903">
    <property type="term" value="F:protein phosphatase binding"/>
    <property type="evidence" value="ECO:0000266"/>
    <property type="project" value="RGD"/>
</dbReference>
<dbReference type="GO" id="GO:0004722">
    <property type="term" value="F:protein serine/threonine phosphatase activity"/>
    <property type="evidence" value="ECO:0000266"/>
    <property type="project" value="RGD"/>
</dbReference>
<dbReference type="GO" id="GO:0004713">
    <property type="term" value="F:protein tyrosine kinase activity"/>
    <property type="evidence" value="ECO:0000314"/>
    <property type="project" value="RGD"/>
</dbReference>
<dbReference type="GO" id="GO:0044877">
    <property type="term" value="F:protein-containing complex binding"/>
    <property type="evidence" value="ECO:0000314"/>
    <property type="project" value="RGD"/>
</dbReference>
<dbReference type="GO" id="GO:0042169">
    <property type="term" value="F:SH2 domain binding"/>
    <property type="evidence" value="ECO:0000266"/>
    <property type="project" value="RGD"/>
</dbReference>
<dbReference type="GO" id="GO:0005102">
    <property type="term" value="F:signaling receptor binding"/>
    <property type="evidence" value="ECO:0000318"/>
    <property type="project" value="GO_Central"/>
</dbReference>
<dbReference type="GO" id="GO:0042608">
    <property type="term" value="F:T cell receptor binding"/>
    <property type="evidence" value="ECO:0000266"/>
    <property type="project" value="RGD"/>
</dbReference>
<dbReference type="GO" id="GO:0050853">
    <property type="term" value="P:B cell receptor signaling pathway"/>
    <property type="evidence" value="ECO:0000266"/>
    <property type="project" value="RGD"/>
</dbReference>
<dbReference type="GO" id="GO:0160162">
    <property type="term" value="P:CD27 signaling pathway"/>
    <property type="evidence" value="ECO:0000266"/>
    <property type="project" value="RGD"/>
</dbReference>
<dbReference type="GO" id="GO:0007169">
    <property type="term" value="P:cell surface receptor protein tyrosine kinase signaling pathway"/>
    <property type="evidence" value="ECO:0000318"/>
    <property type="project" value="GO_Central"/>
</dbReference>
<dbReference type="GO" id="GO:0007166">
    <property type="term" value="P:cell surface receptor signaling pathway"/>
    <property type="evidence" value="ECO:0000266"/>
    <property type="project" value="RGD"/>
</dbReference>
<dbReference type="GO" id="GO:0038094">
    <property type="term" value="P:Fc-gamma receptor signaling pathway"/>
    <property type="evidence" value="ECO:0000266"/>
    <property type="project" value="RGD"/>
</dbReference>
<dbReference type="GO" id="GO:0042492">
    <property type="term" value="P:gamma-delta T cell differentiation"/>
    <property type="evidence" value="ECO:0000266"/>
    <property type="project" value="RGD"/>
</dbReference>
<dbReference type="GO" id="GO:0035556">
    <property type="term" value="P:intracellular signal transduction"/>
    <property type="evidence" value="ECO:0000266"/>
    <property type="project" value="RGD"/>
</dbReference>
<dbReference type="GO" id="GO:0006882">
    <property type="term" value="P:intracellular zinc ion homeostasis"/>
    <property type="evidence" value="ECO:0000266"/>
    <property type="project" value="RGD"/>
</dbReference>
<dbReference type="GO" id="GO:0045588">
    <property type="term" value="P:positive regulation of gamma-delta T cell differentiation"/>
    <property type="evidence" value="ECO:0000266"/>
    <property type="project" value="RGD"/>
</dbReference>
<dbReference type="GO" id="GO:0010628">
    <property type="term" value="P:positive regulation of gene expression"/>
    <property type="evidence" value="ECO:0000266"/>
    <property type="project" value="RGD"/>
</dbReference>
<dbReference type="GO" id="GO:0034116">
    <property type="term" value="P:positive regulation of heterotypic cell-cell adhesion"/>
    <property type="evidence" value="ECO:0000266"/>
    <property type="project" value="RGD"/>
</dbReference>
<dbReference type="GO" id="GO:2001244">
    <property type="term" value="P:positive regulation of intrinsic apoptotic signaling pathway"/>
    <property type="evidence" value="ECO:0000266"/>
    <property type="project" value="RGD"/>
</dbReference>
<dbReference type="GO" id="GO:1903039">
    <property type="term" value="P:positive regulation of leukocyte cell-cell adhesion"/>
    <property type="evidence" value="ECO:0000266"/>
    <property type="project" value="RGD"/>
</dbReference>
<dbReference type="GO" id="GO:0050870">
    <property type="term" value="P:positive regulation of T cell activation"/>
    <property type="evidence" value="ECO:0000266"/>
    <property type="project" value="RGD"/>
</dbReference>
<dbReference type="GO" id="GO:0070474">
    <property type="term" value="P:positive regulation of uterine smooth muscle contraction"/>
    <property type="evidence" value="ECO:0000315"/>
    <property type="project" value="RGD"/>
</dbReference>
<dbReference type="GO" id="GO:0045589">
    <property type="term" value="P:regulation of regulatory T cell differentiation"/>
    <property type="evidence" value="ECO:0000266"/>
    <property type="project" value="RGD"/>
</dbReference>
<dbReference type="GO" id="GO:0050856">
    <property type="term" value="P:regulation of T cell receptor signaling pathway"/>
    <property type="evidence" value="ECO:0000266"/>
    <property type="project" value="RGD"/>
</dbReference>
<dbReference type="GO" id="GO:0051209">
    <property type="term" value="P:release of sequestered calcium ion into cytosol"/>
    <property type="evidence" value="ECO:0000266"/>
    <property type="project" value="RGD"/>
</dbReference>
<dbReference type="GO" id="GO:1904044">
    <property type="term" value="P:response to aldosterone"/>
    <property type="evidence" value="ECO:0000270"/>
    <property type="project" value="RGD"/>
</dbReference>
<dbReference type="GO" id="GO:0042542">
    <property type="term" value="P:response to hydrogen peroxide"/>
    <property type="evidence" value="ECO:0000314"/>
    <property type="project" value="RGD"/>
</dbReference>
<dbReference type="GO" id="GO:0009612">
    <property type="term" value="P:response to mechanical stimulus"/>
    <property type="evidence" value="ECO:0000315"/>
    <property type="project" value="RGD"/>
</dbReference>
<dbReference type="GO" id="GO:0010038">
    <property type="term" value="P:response to metal ion"/>
    <property type="evidence" value="ECO:0000314"/>
    <property type="project" value="RGD"/>
</dbReference>
<dbReference type="GO" id="GO:0009410">
    <property type="term" value="P:response to xenobiotic stimulus"/>
    <property type="evidence" value="ECO:0000266"/>
    <property type="project" value="RGD"/>
</dbReference>
<dbReference type="GO" id="GO:0010043">
    <property type="term" value="P:response to zinc ion"/>
    <property type="evidence" value="ECO:0000270"/>
    <property type="project" value="RGD"/>
</dbReference>
<dbReference type="GO" id="GO:0042110">
    <property type="term" value="P:T cell activation"/>
    <property type="evidence" value="ECO:0000266"/>
    <property type="project" value="RGD"/>
</dbReference>
<dbReference type="GO" id="GO:0030217">
    <property type="term" value="P:T cell differentiation"/>
    <property type="evidence" value="ECO:0000266"/>
    <property type="project" value="RGD"/>
</dbReference>
<dbReference type="GO" id="GO:0050852">
    <property type="term" value="P:T cell receptor signaling pathway"/>
    <property type="evidence" value="ECO:0000266"/>
    <property type="project" value="RGD"/>
</dbReference>
<dbReference type="CDD" id="cd05067">
    <property type="entry name" value="PTKc_Lck_Blk"/>
    <property type="match status" value="1"/>
</dbReference>
<dbReference type="CDD" id="cd10362">
    <property type="entry name" value="SH2_Src_Lck"/>
    <property type="match status" value="1"/>
</dbReference>
<dbReference type="CDD" id="cd12005">
    <property type="entry name" value="SH3_Lck"/>
    <property type="match status" value="1"/>
</dbReference>
<dbReference type="FunFam" id="1.10.510.10:FF:000553">
    <property type="entry name" value="Tyrosine-protein kinase"/>
    <property type="match status" value="1"/>
</dbReference>
<dbReference type="FunFam" id="2.30.30.40:FF:000152">
    <property type="entry name" value="Tyrosine-protein kinase"/>
    <property type="match status" value="1"/>
</dbReference>
<dbReference type="FunFam" id="3.30.200.20:FF:000036">
    <property type="entry name" value="Tyrosine-protein kinase"/>
    <property type="match status" value="1"/>
</dbReference>
<dbReference type="FunFam" id="3.30.505.10:FF:000077">
    <property type="entry name" value="Tyrosine-protein kinase Lck"/>
    <property type="match status" value="1"/>
</dbReference>
<dbReference type="Gene3D" id="3.30.200.20">
    <property type="entry name" value="Phosphorylase Kinase, domain 1"/>
    <property type="match status" value="1"/>
</dbReference>
<dbReference type="Gene3D" id="3.30.505.10">
    <property type="entry name" value="SH2 domain"/>
    <property type="match status" value="1"/>
</dbReference>
<dbReference type="Gene3D" id="2.30.30.40">
    <property type="entry name" value="SH3 Domains"/>
    <property type="match status" value="1"/>
</dbReference>
<dbReference type="Gene3D" id="1.10.510.10">
    <property type="entry name" value="Transferase(Phosphotransferase) domain 1"/>
    <property type="match status" value="1"/>
</dbReference>
<dbReference type="InterPro" id="IPR011009">
    <property type="entry name" value="Kinase-like_dom_sf"/>
</dbReference>
<dbReference type="InterPro" id="IPR035850">
    <property type="entry name" value="Lck_SH2"/>
</dbReference>
<dbReference type="InterPro" id="IPR035749">
    <property type="entry name" value="Lck_SH3"/>
</dbReference>
<dbReference type="InterPro" id="IPR050198">
    <property type="entry name" value="Non-receptor_tyrosine_kinases"/>
</dbReference>
<dbReference type="InterPro" id="IPR000719">
    <property type="entry name" value="Prot_kinase_dom"/>
</dbReference>
<dbReference type="InterPro" id="IPR017441">
    <property type="entry name" value="Protein_kinase_ATP_BS"/>
</dbReference>
<dbReference type="InterPro" id="IPR001245">
    <property type="entry name" value="Ser-Thr/Tyr_kinase_cat_dom"/>
</dbReference>
<dbReference type="InterPro" id="IPR000980">
    <property type="entry name" value="SH2"/>
</dbReference>
<dbReference type="InterPro" id="IPR036860">
    <property type="entry name" value="SH2_dom_sf"/>
</dbReference>
<dbReference type="InterPro" id="IPR036028">
    <property type="entry name" value="SH3-like_dom_sf"/>
</dbReference>
<dbReference type="InterPro" id="IPR001452">
    <property type="entry name" value="SH3_domain"/>
</dbReference>
<dbReference type="InterPro" id="IPR008266">
    <property type="entry name" value="Tyr_kinase_AS"/>
</dbReference>
<dbReference type="InterPro" id="IPR020635">
    <property type="entry name" value="Tyr_kinase_cat_dom"/>
</dbReference>
<dbReference type="PANTHER" id="PTHR24418">
    <property type="entry name" value="TYROSINE-PROTEIN KINASE"/>
    <property type="match status" value="1"/>
</dbReference>
<dbReference type="Pfam" id="PF07714">
    <property type="entry name" value="PK_Tyr_Ser-Thr"/>
    <property type="match status" value="1"/>
</dbReference>
<dbReference type="Pfam" id="PF00017">
    <property type="entry name" value="SH2"/>
    <property type="match status" value="1"/>
</dbReference>
<dbReference type="Pfam" id="PF00018">
    <property type="entry name" value="SH3_1"/>
    <property type="match status" value="1"/>
</dbReference>
<dbReference type="PRINTS" id="PR00401">
    <property type="entry name" value="SH2DOMAIN"/>
</dbReference>
<dbReference type="PRINTS" id="PR00452">
    <property type="entry name" value="SH3DOMAIN"/>
</dbReference>
<dbReference type="PRINTS" id="PR00109">
    <property type="entry name" value="TYRKINASE"/>
</dbReference>
<dbReference type="SMART" id="SM00252">
    <property type="entry name" value="SH2"/>
    <property type="match status" value="1"/>
</dbReference>
<dbReference type="SMART" id="SM00326">
    <property type="entry name" value="SH3"/>
    <property type="match status" value="1"/>
</dbReference>
<dbReference type="SMART" id="SM00219">
    <property type="entry name" value="TyrKc"/>
    <property type="match status" value="1"/>
</dbReference>
<dbReference type="SUPFAM" id="SSF56112">
    <property type="entry name" value="Protein kinase-like (PK-like)"/>
    <property type="match status" value="1"/>
</dbReference>
<dbReference type="SUPFAM" id="SSF55550">
    <property type="entry name" value="SH2 domain"/>
    <property type="match status" value="1"/>
</dbReference>
<dbReference type="SUPFAM" id="SSF50044">
    <property type="entry name" value="SH3-domain"/>
    <property type="match status" value="1"/>
</dbReference>
<dbReference type="PROSITE" id="PS00107">
    <property type="entry name" value="PROTEIN_KINASE_ATP"/>
    <property type="match status" value="1"/>
</dbReference>
<dbReference type="PROSITE" id="PS50011">
    <property type="entry name" value="PROTEIN_KINASE_DOM"/>
    <property type="match status" value="1"/>
</dbReference>
<dbReference type="PROSITE" id="PS00109">
    <property type="entry name" value="PROTEIN_KINASE_TYR"/>
    <property type="match status" value="1"/>
</dbReference>
<dbReference type="PROSITE" id="PS50001">
    <property type="entry name" value="SH2"/>
    <property type="match status" value="1"/>
</dbReference>
<dbReference type="PROSITE" id="PS50002">
    <property type="entry name" value="SH3"/>
    <property type="match status" value="1"/>
</dbReference>
<protein>
    <recommendedName>
        <fullName>Proto-oncogene tyrosine-protein kinase LCK</fullName>
        <ecNumber>2.7.10.2</ecNumber>
    </recommendedName>
    <alternativeName>
        <fullName>Lymphocyte cell-specific protein-tyrosine kinase</fullName>
    </alternativeName>
    <alternativeName>
        <fullName>p56-LCK</fullName>
    </alternativeName>
</protein>
<accession>Q01621</accession>
<accession>B1H265</accession>
<reference key="1">
    <citation type="submission" date="2005-07" db="EMBL/GenBank/DDBJ databases">
        <authorList>
            <person name="Mural R.J."/>
            <person name="Adams M.D."/>
            <person name="Myers E.W."/>
            <person name="Smith H.O."/>
            <person name="Venter J.C."/>
        </authorList>
    </citation>
    <scope>NUCLEOTIDE SEQUENCE [LARGE SCALE GENOMIC DNA]</scope>
</reference>
<reference key="2">
    <citation type="journal article" date="2004" name="Genome Res.">
        <title>The status, quality, and expansion of the NIH full-length cDNA project: the Mammalian Gene Collection (MGC).</title>
        <authorList>
            <consortium name="The MGC Project Team"/>
        </authorList>
    </citation>
    <scope>NUCLEOTIDE SEQUENCE [LARGE SCALE MRNA]</scope>
    <source>
        <tissue>Thymus</tissue>
    </source>
</reference>
<reference key="3">
    <citation type="journal article" date="1993" name="Oncogene">
        <title>Frequent activation of the lck gene by promoter insertion and aberrant splicing in murine leukemia virus-induced rat lymphomas.</title>
        <authorList>
            <person name="Shin S."/>
            <person name="Steffen D.L."/>
        </authorList>
    </citation>
    <scope>NUCLEOTIDE SEQUENCE [GENOMIC DNA] OF 1-18</scope>
    <source>
        <strain>Fischer</strain>
    </source>
</reference>
<reference key="4">
    <citation type="journal article" date="2012" name="Nat. Commun.">
        <title>Quantitative maps of protein phosphorylation sites across 14 different rat organs and tissues.</title>
        <authorList>
            <person name="Lundby A."/>
            <person name="Secher A."/>
            <person name="Lage K."/>
            <person name="Nordsborg N.B."/>
            <person name="Dmytriyev A."/>
            <person name="Lundby C."/>
            <person name="Olsen J.V."/>
        </authorList>
    </citation>
    <scope>PHOSPHORYLATION [LARGE SCALE ANALYSIS] AT TYR-192 AND TYR-505</scope>
    <scope>IDENTIFICATION BY MASS SPECTROMETRY [LARGE SCALE ANALYSIS]</scope>
</reference>
<name>LCK_RAT</name>
<comment type="function">
    <text evidence="1">Non-receptor tyrosine-protein kinase that plays an essential role in the selection and maturation of developing T-cells in the thymus and in the function of mature T-cells. Plays a key role in T-cell antigen receptor (TCR)-linked signal transduction pathways. Constitutively associated with the cytoplasmic portions of the CD4 and CD8 surface receptors. Association of the TCR with a peptide antigen-bound MHC complex facilitates the interaction of CD4 and CD8 with MHC class II and class I molecules, respectively, thereby recruiting the associated LCK protein to the vicinity of the TCR/CD3 complex. LCK then phosphorylates tyrosine residues within the immunoreceptor tyrosine-based activation motifs (ITAM) of the cytoplasmic tails of the TCR-gamma chains and CD3 subunits, initiating the TCR/CD3 signaling pathway. Once stimulated, the TCR recruits the tyrosine kinase ZAP70, that becomes phosphorylated and activated by LCK. Following this, a large number of signaling molecules are recruited, ultimately leading to lymphokine production. LCK also contributes to signaling by other receptor molecules. Associates directly with the cytoplasmic tail of CD2, which leads to hyperphosphorylation and activation of LCK. Also plays a role in the IL2 receptor-linked signaling pathway that controls the T-cell proliferative response. Binding of IL2 to its receptor results in increased activity of LCK. Is expressed at all stages of thymocyte development and is required for the regulation of maturation events that are governed by both pre-TCR and mature alpha beta TCR. Phosphorylates other substrates including RUNX3, PTK2B/PYK2, the microtubule-associated protein MAPT, RHOH or TYROBP (By similarity). Interacts with UNC119; this interaction plays a crucial role in activation of LCK (By similarity).</text>
</comment>
<comment type="catalytic activity">
    <reaction evidence="6">
        <text>L-tyrosyl-[protein] + ATP = O-phospho-L-tyrosyl-[protein] + ADP + H(+)</text>
        <dbReference type="Rhea" id="RHEA:10596"/>
        <dbReference type="Rhea" id="RHEA-COMP:10136"/>
        <dbReference type="Rhea" id="RHEA-COMP:20101"/>
        <dbReference type="ChEBI" id="CHEBI:15378"/>
        <dbReference type="ChEBI" id="CHEBI:30616"/>
        <dbReference type="ChEBI" id="CHEBI:46858"/>
        <dbReference type="ChEBI" id="CHEBI:61978"/>
        <dbReference type="ChEBI" id="CHEBI:456216"/>
        <dbReference type="EC" id="2.7.10.2"/>
    </reaction>
</comment>
<comment type="activity regulation">
    <text evidence="1">The relative activities of the inhibitory tyrosine-protein kinase CSK and the activating tyrosine-protein phosphatase PTPRC/CD45 determine the level of LCK activity. These interactions allow rapid and efficient activation of LCK in response to TCR stimulation (By similarity).</text>
</comment>
<comment type="subunit">
    <text evidence="2">Binds to the cytoplasmic domain of cell surface receptors, such as AXL, CD2, CD4, CD5, CD8, CD44, CD45 and CD122. Also binds to effector molecules, such as PI4K, VAV1, RASA1, FYB1 and to other protein kinases including CDK1, RAF1, ZAP70 and SYK. Binds to phosphatidylinositol 3'-kinase (PI3K) from T-lymphocytes through its SH3 domain and to the tyrosine phosphorylated form of KHDRBS1/p70 through its SH2 domain. Interacts with SQSTM1. Interacts with phosphorylated LIME1. Interacts with CBLB and PTPRH. Interacts with RUNX3. Forms a signaling complex with EPHA1, PTK2B and PI3-KINASE; upon activation by EFNA1 which may regulate T-lymphocytes migration. Associates with ZAP70 and RHOH; these interactions allow LCK-mediated RHOH and CD3 subunit phosphorylations in presence of a functional ZAP70. Interacts with CEACAM1 (via cytoplasmic domain); mediates CEACAM1 phosphorylation resulting in PTPN6 recruitment that dephosphorylates TCR stimulation-induced CD247 and ZAP70. Interacts with FYB2. Interacts with CD160. Interacts with CD48.</text>
</comment>
<comment type="subcellular location">
    <subcellularLocation>
        <location evidence="2">Cell membrane</location>
        <topology evidence="2">Lipid-anchor</topology>
        <orientation evidence="2">Cytoplasmic side</orientation>
    </subcellularLocation>
    <subcellularLocation>
        <location evidence="2">Cytoplasm</location>
        <location evidence="2">Cytosol</location>
    </subcellularLocation>
    <text evidence="2">Present in lipid rafts in an inactive form.</text>
</comment>
<comment type="PTM">
    <text evidence="1 2">Autophosphorylated on Tyr-394, increasing enzymatic activity, this site is dephosphorylated by PTN22. Phosphorylated on Tyr-505 by CSK, decreasing activity. Dephosphorylated by PTPRC/CD45. Dephosphorylation at Tyr-394 by PTPN2 negatively regulates T-cells differentiation (By similarity). Dephosphorylation at Tyr-394 by DUSP22 negatively regulates T-cell receptor signaling (By similarity).</text>
</comment>
<comment type="PTM">
    <text evidence="1">Myristoylation is required prior to palmitoylation.</text>
</comment>
<comment type="PTM">
    <text evidence="2">Palmitoylation regulates association with the plasma membrane and could be mediated by ZDHHC2.</text>
</comment>
<comment type="PTM">
    <text evidence="2">'Lys-63'-linked ubiquitinated at Lys-99 and Lys-276 by UBR2; this modification is required for autophosphorylation at Tyr-394.</text>
</comment>
<comment type="disease">
    <text>Proviral insertion upstream of the Lck gene causes overexpression, leading to the development of thymic lymphoma.</text>
</comment>
<comment type="similarity">
    <text evidence="3">Belongs to the protein kinase superfamily. Tyr protein kinase family. SRC subfamily.</text>
</comment>
<organism>
    <name type="scientific">Rattus norvegicus</name>
    <name type="common">Rat</name>
    <dbReference type="NCBI Taxonomy" id="10116"/>
    <lineage>
        <taxon>Eukaryota</taxon>
        <taxon>Metazoa</taxon>
        <taxon>Chordata</taxon>
        <taxon>Craniata</taxon>
        <taxon>Vertebrata</taxon>
        <taxon>Euteleostomi</taxon>
        <taxon>Mammalia</taxon>
        <taxon>Eutheria</taxon>
        <taxon>Euarchontoglires</taxon>
        <taxon>Glires</taxon>
        <taxon>Rodentia</taxon>
        <taxon>Myomorpha</taxon>
        <taxon>Muroidea</taxon>
        <taxon>Muridae</taxon>
        <taxon>Murinae</taxon>
        <taxon>Rattus</taxon>
    </lineage>
</organism>
<gene>
    <name type="primary">Lck</name>
</gene>
<keyword id="KW-0067">ATP-binding</keyword>
<keyword id="KW-1003">Cell membrane</keyword>
<keyword id="KW-0963">Cytoplasm</keyword>
<keyword id="KW-1017">Isopeptide bond</keyword>
<keyword id="KW-0418">Kinase</keyword>
<keyword id="KW-0449">Lipoprotein</keyword>
<keyword id="KW-0472">Membrane</keyword>
<keyword id="KW-0519">Myristate</keyword>
<keyword id="KW-0547">Nucleotide-binding</keyword>
<keyword id="KW-0564">Palmitate</keyword>
<keyword id="KW-0597">Phosphoprotein</keyword>
<keyword id="KW-0656">Proto-oncogene</keyword>
<keyword id="KW-1185">Reference proteome</keyword>
<keyword id="KW-0728">SH3 domain</keyword>
<keyword id="KW-0808">Transferase</keyword>
<keyword id="KW-0829">Tyrosine-protein kinase</keyword>
<keyword id="KW-0832">Ubl conjugation</keyword>
<proteinExistence type="evidence at protein level"/>
<feature type="initiator methionine" description="Removed">
    <location>
        <position position="1"/>
    </location>
</feature>
<feature type="chain" id="PRO_0000088126" description="Proto-oncogene tyrosine-protein kinase LCK">
    <location>
        <begin position="2"/>
        <end position="509"/>
    </location>
</feature>
<feature type="domain" description="SH3" evidence="5">
    <location>
        <begin position="61"/>
        <end position="121"/>
    </location>
</feature>
<feature type="domain" description="SH2" evidence="4">
    <location>
        <begin position="127"/>
        <end position="224"/>
    </location>
</feature>
<feature type="domain" description="Protein kinase" evidence="3">
    <location>
        <begin position="245"/>
        <end position="498"/>
    </location>
</feature>
<feature type="region of interest" description="Interactions with CD4 and CD8" evidence="1">
    <location>
        <begin position="2"/>
        <end position="72"/>
    </location>
</feature>
<feature type="region of interest" description="Interaction with PTPRH" evidence="1">
    <location>
        <begin position="154"/>
        <end position="242"/>
    </location>
</feature>
<feature type="active site" description="Proton acceptor" evidence="3 6">
    <location>
        <position position="364"/>
    </location>
</feature>
<feature type="binding site" evidence="3">
    <location>
        <begin position="251"/>
        <end position="259"/>
    </location>
    <ligand>
        <name>ATP</name>
        <dbReference type="ChEBI" id="CHEBI:30616"/>
    </ligand>
</feature>
<feature type="binding site" evidence="3">
    <location>
        <position position="273"/>
    </location>
    <ligand>
        <name>ATP</name>
        <dbReference type="ChEBI" id="CHEBI:30616"/>
    </ligand>
</feature>
<feature type="modified residue" description="Phosphoserine" evidence="2">
    <location>
        <position position="102"/>
    </location>
</feature>
<feature type="modified residue" description="Phosphothreonine" evidence="2">
    <location>
        <position position="159"/>
    </location>
</feature>
<feature type="modified residue" description="Phosphoserine" evidence="2">
    <location>
        <position position="162"/>
    </location>
</feature>
<feature type="modified residue" description="Phosphotyrosine" evidence="7">
    <location>
        <position position="192"/>
    </location>
</feature>
<feature type="modified residue" description="Phosphoserine" evidence="2">
    <location>
        <position position="194"/>
    </location>
</feature>
<feature type="modified residue" description="Phosphotyrosine; by autocatalysis" evidence="2">
    <location>
        <position position="394"/>
    </location>
</feature>
<feature type="modified residue" description="Phosphotyrosine" evidence="7">
    <location>
        <position position="505"/>
    </location>
</feature>
<feature type="lipid moiety-binding region" description="N-myristoyl glycine" evidence="1">
    <location>
        <position position="2"/>
    </location>
</feature>
<feature type="lipid moiety-binding region" description="S-palmitoyl cysteine" evidence="1">
    <location>
        <position position="3"/>
    </location>
</feature>
<feature type="lipid moiety-binding region" description="S-palmitoyl cysteine" evidence="1">
    <location>
        <position position="5"/>
    </location>
</feature>
<feature type="cross-link" description="Glycyl lysine isopeptide (Lys-Gly) (interchain with G-Cter in ubiquitin)" evidence="2">
    <location>
        <position position="99"/>
    </location>
</feature>
<feature type="cross-link" description="Glycyl lysine isopeptide (Lys-Gly) (interchain with G-Cter in ubiquitin)" evidence="2">
    <location>
        <position position="276"/>
    </location>
</feature>